<comment type="function">
    <text evidence="1">Peptidoglycan polymerase that catalyzes glycan chain elongation from lipid-linked precursors.</text>
</comment>
<comment type="catalytic activity">
    <reaction evidence="1">
        <text>[GlcNAc-(1-&gt;4)-Mur2Ac(oyl-L-Ala-gamma-D-Glu-L-Lys-D-Ala-D-Ala)](n)-di-trans,octa-cis-undecaprenyl diphosphate + beta-D-GlcNAc-(1-&gt;4)-Mur2Ac(oyl-L-Ala-gamma-D-Glu-L-Lys-D-Ala-D-Ala)-di-trans,octa-cis-undecaprenyl diphosphate = [GlcNAc-(1-&gt;4)-Mur2Ac(oyl-L-Ala-gamma-D-Glu-L-Lys-D-Ala-D-Ala)](n+1)-di-trans,octa-cis-undecaprenyl diphosphate + di-trans,octa-cis-undecaprenyl diphosphate + H(+)</text>
        <dbReference type="Rhea" id="RHEA:23708"/>
        <dbReference type="Rhea" id="RHEA-COMP:9602"/>
        <dbReference type="Rhea" id="RHEA-COMP:9603"/>
        <dbReference type="ChEBI" id="CHEBI:15378"/>
        <dbReference type="ChEBI" id="CHEBI:58405"/>
        <dbReference type="ChEBI" id="CHEBI:60033"/>
        <dbReference type="ChEBI" id="CHEBI:78435"/>
        <dbReference type="EC" id="2.4.99.28"/>
    </reaction>
</comment>
<comment type="pathway">
    <text evidence="1">Cell wall biogenesis; peptidoglycan biosynthesis.</text>
</comment>
<comment type="subcellular location">
    <subcellularLocation>
        <location evidence="1">Cell inner membrane</location>
        <topology evidence="1">Single-pass membrane protein</topology>
    </subcellularLocation>
</comment>
<comment type="similarity">
    <text evidence="1">Belongs to the glycosyltransferase 51 family.</text>
</comment>
<gene>
    <name evidence="1" type="primary">mtgA</name>
    <name type="ordered locus">PSEEN0304</name>
</gene>
<name>MTGA_PSEE4</name>
<feature type="chain" id="PRO_1000017311" description="Biosynthetic peptidoglycan transglycosylase">
    <location>
        <begin position="1"/>
        <end position="236"/>
    </location>
</feature>
<feature type="transmembrane region" description="Helical" evidence="1">
    <location>
        <begin position="12"/>
        <end position="31"/>
    </location>
</feature>
<keyword id="KW-0997">Cell inner membrane</keyword>
<keyword id="KW-1003">Cell membrane</keyword>
<keyword id="KW-0133">Cell shape</keyword>
<keyword id="KW-0961">Cell wall biogenesis/degradation</keyword>
<keyword id="KW-0328">Glycosyltransferase</keyword>
<keyword id="KW-0472">Membrane</keyword>
<keyword id="KW-0573">Peptidoglycan synthesis</keyword>
<keyword id="KW-0808">Transferase</keyword>
<keyword id="KW-0812">Transmembrane</keyword>
<keyword id="KW-1133">Transmembrane helix</keyword>
<evidence type="ECO:0000255" key="1">
    <source>
        <dbReference type="HAMAP-Rule" id="MF_00766"/>
    </source>
</evidence>
<protein>
    <recommendedName>
        <fullName evidence="1">Biosynthetic peptidoglycan transglycosylase</fullName>
        <ecNumber evidence="1">2.4.99.28</ecNumber>
    </recommendedName>
    <alternativeName>
        <fullName evidence="1">Glycan polymerase</fullName>
    </alternativeName>
    <alternativeName>
        <fullName evidence="1">Peptidoglycan glycosyltransferase MtgA</fullName>
        <shortName evidence="1">PGT</shortName>
    </alternativeName>
</protein>
<proteinExistence type="inferred from homology"/>
<accession>Q1IGD6</accession>
<organism>
    <name type="scientific">Pseudomonas entomophila (strain L48)</name>
    <dbReference type="NCBI Taxonomy" id="384676"/>
    <lineage>
        <taxon>Bacteria</taxon>
        <taxon>Pseudomonadati</taxon>
        <taxon>Pseudomonadota</taxon>
        <taxon>Gammaproteobacteria</taxon>
        <taxon>Pseudomonadales</taxon>
        <taxon>Pseudomonadaceae</taxon>
        <taxon>Pseudomonas</taxon>
    </lineage>
</organism>
<reference key="1">
    <citation type="journal article" date="2006" name="Nat. Biotechnol.">
        <title>Complete genome sequence of the entomopathogenic and metabolically versatile soil bacterium Pseudomonas entomophila.</title>
        <authorList>
            <person name="Vodovar N."/>
            <person name="Vallenet D."/>
            <person name="Cruveiller S."/>
            <person name="Rouy Z."/>
            <person name="Barbe V."/>
            <person name="Acosta C."/>
            <person name="Cattolico L."/>
            <person name="Jubin C."/>
            <person name="Lajus A."/>
            <person name="Segurens B."/>
            <person name="Vacherie B."/>
            <person name="Wincker P."/>
            <person name="Weissenbach J."/>
            <person name="Lemaitre B."/>
            <person name="Medigue C."/>
            <person name="Boccard F."/>
        </authorList>
    </citation>
    <scope>NUCLEOTIDE SEQUENCE [LARGE SCALE GENOMIC DNA]</scope>
    <source>
        <strain>L48</strain>
    </source>
</reference>
<sequence>MLSSLLRRLSRALLWFAAGSIAVVLVLRWVPPPGTALMVERKVESWFNGEPIDLQRDWTPWEDISDELKVAVIAGEDQKFASHWGFDIPAIQAALAYNERGGKVRGASTLTQQVAKNMFLWSGRSWLRKGLEAWFTALIELFWSKERILEVYLNSAEWGKGVFGAQAAARYHFGVDASRLSRQQAAQLAAVLPSPIKWSASRPSAYVASRAGWIRRQMSQLGGPSYLMQLDASRKL</sequence>
<dbReference type="EC" id="2.4.99.28" evidence="1"/>
<dbReference type="EMBL" id="CT573326">
    <property type="protein sequence ID" value="CAK13266.1"/>
    <property type="molecule type" value="Genomic_DNA"/>
</dbReference>
<dbReference type="RefSeq" id="WP_011531726.1">
    <property type="nucleotide sequence ID" value="NC_008027.1"/>
</dbReference>
<dbReference type="SMR" id="Q1IGD6"/>
<dbReference type="STRING" id="384676.PSEEN0304"/>
<dbReference type="CAZy" id="GT51">
    <property type="family name" value="Glycosyltransferase Family 51"/>
</dbReference>
<dbReference type="GeneID" id="32803647"/>
<dbReference type="KEGG" id="pen:PSEEN0304"/>
<dbReference type="eggNOG" id="COG0744">
    <property type="taxonomic scope" value="Bacteria"/>
</dbReference>
<dbReference type="HOGENOM" id="CLU_006354_1_1_6"/>
<dbReference type="OrthoDB" id="9766909at2"/>
<dbReference type="UniPathway" id="UPA00219"/>
<dbReference type="Proteomes" id="UP000000658">
    <property type="component" value="Chromosome"/>
</dbReference>
<dbReference type="GO" id="GO:0009274">
    <property type="term" value="C:peptidoglycan-based cell wall"/>
    <property type="evidence" value="ECO:0007669"/>
    <property type="project" value="InterPro"/>
</dbReference>
<dbReference type="GO" id="GO:0005886">
    <property type="term" value="C:plasma membrane"/>
    <property type="evidence" value="ECO:0007669"/>
    <property type="project" value="UniProtKB-SubCell"/>
</dbReference>
<dbReference type="GO" id="GO:0016763">
    <property type="term" value="F:pentosyltransferase activity"/>
    <property type="evidence" value="ECO:0007669"/>
    <property type="project" value="InterPro"/>
</dbReference>
<dbReference type="GO" id="GO:0008955">
    <property type="term" value="F:peptidoglycan glycosyltransferase activity"/>
    <property type="evidence" value="ECO:0007669"/>
    <property type="project" value="UniProtKB-UniRule"/>
</dbReference>
<dbReference type="GO" id="GO:0071555">
    <property type="term" value="P:cell wall organization"/>
    <property type="evidence" value="ECO:0007669"/>
    <property type="project" value="UniProtKB-KW"/>
</dbReference>
<dbReference type="GO" id="GO:0009252">
    <property type="term" value="P:peptidoglycan biosynthetic process"/>
    <property type="evidence" value="ECO:0007669"/>
    <property type="project" value="UniProtKB-UniRule"/>
</dbReference>
<dbReference type="GO" id="GO:0008360">
    <property type="term" value="P:regulation of cell shape"/>
    <property type="evidence" value="ECO:0007669"/>
    <property type="project" value="UniProtKB-KW"/>
</dbReference>
<dbReference type="Gene3D" id="1.10.3810.10">
    <property type="entry name" value="Biosynthetic peptidoglycan transglycosylase-like"/>
    <property type="match status" value="1"/>
</dbReference>
<dbReference type="HAMAP" id="MF_00766">
    <property type="entry name" value="PGT_MtgA"/>
    <property type="match status" value="1"/>
</dbReference>
<dbReference type="InterPro" id="IPR001264">
    <property type="entry name" value="Glyco_trans_51"/>
</dbReference>
<dbReference type="InterPro" id="IPR023346">
    <property type="entry name" value="Lysozyme-like_dom_sf"/>
</dbReference>
<dbReference type="InterPro" id="IPR036950">
    <property type="entry name" value="PBP_transglycosylase"/>
</dbReference>
<dbReference type="InterPro" id="IPR011812">
    <property type="entry name" value="Pep_trsgly"/>
</dbReference>
<dbReference type="NCBIfam" id="TIGR02070">
    <property type="entry name" value="mono_pep_trsgly"/>
    <property type="match status" value="1"/>
</dbReference>
<dbReference type="PANTHER" id="PTHR30400:SF0">
    <property type="entry name" value="BIOSYNTHETIC PEPTIDOGLYCAN TRANSGLYCOSYLASE"/>
    <property type="match status" value="1"/>
</dbReference>
<dbReference type="PANTHER" id="PTHR30400">
    <property type="entry name" value="MONOFUNCTIONAL BIOSYNTHETIC PEPTIDOGLYCAN TRANSGLYCOSYLASE"/>
    <property type="match status" value="1"/>
</dbReference>
<dbReference type="Pfam" id="PF00912">
    <property type="entry name" value="Transgly"/>
    <property type="match status" value="1"/>
</dbReference>
<dbReference type="SUPFAM" id="SSF53955">
    <property type="entry name" value="Lysozyme-like"/>
    <property type="match status" value="1"/>
</dbReference>